<gene>
    <name evidence="1 4" type="primary">gvpA</name>
    <name evidence="6" type="ORF">AMK26_13475</name>
</gene>
<proteinExistence type="evidence at transcript level"/>
<name>GVPA_STRX0</name>
<evidence type="ECO:0000255" key="1">
    <source>
        <dbReference type="HAMAP-Rule" id="MF_00576"/>
    </source>
</evidence>
<evidence type="ECO:0000256" key="2">
    <source>
        <dbReference type="SAM" id="MobiDB-lite"/>
    </source>
</evidence>
<evidence type="ECO:0000269" key="3">
    <source>
    </source>
</evidence>
<evidence type="ECO:0000303" key="4">
    <source>
    </source>
</evidence>
<evidence type="ECO:0000305" key="5"/>
<evidence type="ECO:0000312" key="6">
    <source>
        <dbReference type="EMBL" id="OKK04378.1"/>
    </source>
</evidence>
<comment type="function">
    <text evidence="1 5">Gas vesicles are hollow, gas filled proteinaceous nanostructures found in some microorganisms. During planktonic growth they allow positioning of the organism at a favorable depth for light or nutrient acquisition. GvpA forms the protein shell (By similarity). It is not clear what function gas vesicles perform in soil bacteria (Probable).</text>
</comment>
<comment type="subunit">
    <text evidence="1">The gas vesicle shell is 2 nm thick and consists of a single layer of this protein. It forms helical ribs nearly perpendicular to the long axis of the vesicle.</text>
</comment>
<comment type="subcellular location">
    <subcellularLocation>
        <location evidence="1">Gas vesicle shell</location>
    </subcellularLocation>
</comment>
<comment type="induction">
    <text evidence="3">Gas vesicle production is induced by growth conditions that promote production of secondary metabolites tiancimycin A and B.</text>
</comment>
<comment type="miscellaneous">
    <text evidence="3">This strain probably produces some gas vesicles from the probable gvpO-gvpA-gvpF-gvpG-gvpJ-gvpL-gvpS-gvpK operon; it can be induced to produce more under certain growth conditions.</text>
</comment>
<comment type="similarity">
    <text evidence="1">Belongs to the gas vesicle GvpA family.</text>
</comment>
<protein>
    <recommendedName>
        <fullName evidence="1 4">Gas vesicle protein A</fullName>
        <shortName evidence="1 4">GvpA</shortName>
    </recommendedName>
</protein>
<dbReference type="EMBL" id="LIYH01000003">
    <property type="protein sequence ID" value="OKK04378.1"/>
    <property type="molecule type" value="Genomic_DNA"/>
</dbReference>
<dbReference type="RefSeq" id="WP_073754891.1">
    <property type="nucleotide sequence ID" value="NZ_LIYH01000003.1"/>
</dbReference>
<dbReference type="SMR" id="A0A1Q5LR04"/>
<dbReference type="STRING" id="1703937.AMK26_13475"/>
<dbReference type="OrthoDB" id="284387at2"/>
<dbReference type="Proteomes" id="UP000186270">
    <property type="component" value="Unassembled WGS sequence"/>
</dbReference>
<dbReference type="GO" id="GO:0033172">
    <property type="term" value="C:gas vesicle shell"/>
    <property type="evidence" value="ECO:0007669"/>
    <property type="project" value="UniProtKB-UniRule"/>
</dbReference>
<dbReference type="GO" id="GO:0012506">
    <property type="term" value="C:vesicle membrane"/>
    <property type="evidence" value="ECO:0007669"/>
    <property type="project" value="InterPro"/>
</dbReference>
<dbReference type="GO" id="GO:0005198">
    <property type="term" value="F:structural molecule activity"/>
    <property type="evidence" value="ECO:0007669"/>
    <property type="project" value="InterPro"/>
</dbReference>
<dbReference type="HAMAP" id="MF_00576">
    <property type="entry name" value="Gas_vesicle_A"/>
    <property type="match status" value="1"/>
</dbReference>
<dbReference type="InterPro" id="IPR000638">
    <property type="entry name" value="Gas-vesicle_GvpA-like"/>
</dbReference>
<dbReference type="InterPro" id="IPR047870">
    <property type="entry name" value="Gas_vesicle_GvpA"/>
</dbReference>
<dbReference type="InterPro" id="IPR050530">
    <property type="entry name" value="GvpA"/>
</dbReference>
<dbReference type="InterPro" id="IPR018493">
    <property type="entry name" value="GvpA-like_CS"/>
</dbReference>
<dbReference type="NCBIfam" id="NF006872">
    <property type="entry name" value="PRK09368.1"/>
    <property type="match status" value="1"/>
</dbReference>
<dbReference type="PANTHER" id="PTHR35344:SF4">
    <property type="entry name" value="GAS VESICLE PROTEIN A1"/>
    <property type="match status" value="1"/>
</dbReference>
<dbReference type="PANTHER" id="PTHR35344">
    <property type="entry name" value="GAS VESICLE STRUCTURAL PROTEIN 2-RELATED"/>
    <property type="match status" value="1"/>
</dbReference>
<dbReference type="Pfam" id="PF00741">
    <property type="entry name" value="Gas_vesicle"/>
    <property type="match status" value="1"/>
</dbReference>
<dbReference type="PROSITE" id="PS00234">
    <property type="entry name" value="GAS_VESICLE_A_1"/>
    <property type="match status" value="1"/>
</dbReference>
<dbReference type="PROSITE" id="PS00669">
    <property type="entry name" value="GAS_VESICLE_A_2"/>
    <property type="match status" value="1"/>
</dbReference>
<reference evidence="6" key="1">
    <citation type="journal article" date="2016" name="MBio">
        <title>Strain Prioritization and Genome Mining for Enediyne Natural Products.</title>
        <authorList>
            <person name="Yan X."/>
            <person name="Ge H."/>
            <person name="Huang T."/>
            <person name="Hindra X."/>
            <person name="Yang D."/>
            <person name="Teng Q."/>
            <person name="Crnovcic I."/>
            <person name="Li X."/>
            <person name="Rudolf J.D."/>
            <person name="Lohman J.R."/>
            <person name="Gansemans Y."/>
            <person name="Zhu X."/>
            <person name="Huang Y."/>
            <person name="Zhao L.X."/>
            <person name="Jiang Y."/>
            <person name="Van Nieuwerburgh F."/>
            <person name="Rader C."/>
            <person name="Duan Y."/>
            <person name="Shen B."/>
        </authorList>
    </citation>
    <scope>NUCLEOTIDE SEQUENCE [LARGE SCALE GENOMIC DNA]</scope>
    <source>
        <strain>CB03234</strain>
    </source>
</reference>
<reference key="2">
    <citation type="journal article" date="2019" name="Appl. Microbiol. Biotechnol.">
        <title>Discovery of gas vesicles in Streptomyces sp. CB03234-S and potential effects of gas vesicle gene overexpression on morphological and metabolic changes in streptomycetes.</title>
        <authorList>
            <person name="Huang R."/>
            <person name="Lin J."/>
            <person name="Gao D."/>
            <person name="Zhang F."/>
            <person name="Yi L."/>
            <person name="Huang Y."/>
            <person name="Yan X."/>
            <person name="Duan Y."/>
            <person name="Zhu X."/>
        </authorList>
    </citation>
    <scope>INDUCTION</scope>
    <scope>PROBABLE GAS VESICLE FORMATION</scope>
    <source>
        <strain>CB03234</strain>
    </source>
</reference>
<keyword id="KW-0304">Gas vesicle</keyword>
<keyword id="KW-1185">Reference proteome</keyword>
<accession>A0A1Q5LR04</accession>
<sequence length="138" mass="14269">MTVVPAQQGGGGARGTSGLYDVLELVLDRGLVIDAFVRVSLVGIEILKIDVRVVVASVDTYLRFAEACNRLDLEAGPRKDPGLPDLVGEMTESGARGKSKGALSGAAETISDALKGSSSGSSSGSSSRSTSRKKEEQE</sequence>
<organism>
    <name type="scientific">Streptomyces sp. (strain CB03234)</name>
    <dbReference type="NCBI Taxonomy" id="1703937"/>
    <lineage>
        <taxon>Bacteria</taxon>
        <taxon>Bacillati</taxon>
        <taxon>Actinomycetota</taxon>
        <taxon>Actinomycetes</taxon>
        <taxon>Kitasatosporales</taxon>
        <taxon>Streptomycetaceae</taxon>
        <taxon>Streptomyces</taxon>
    </lineage>
</organism>
<feature type="chain" id="PRO_0000458450" description="Gas vesicle protein A">
    <location>
        <begin position="1"/>
        <end position="138"/>
    </location>
</feature>
<feature type="region of interest" description="Disordered" evidence="2">
    <location>
        <begin position="74"/>
        <end position="138"/>
    </location>
</feature>
<feature type="compositionally biased region" description="Low complexity" evidence="2">
    <location>
        <begin position="116"/>
        <end position="129"/>
    </location>
</feature>